<sequence>MNVGTAHSEVNPNTRVMNSRGIWLSYVLGIGLLHIILLSIPFVSVPVVWTLTNLIHNMCMYIFLHTVKGTPFETPDQGKARLLTHWEQMDYGVQFTASRKFLTITPIILYFLTSFYTKYDRVHFVINTISLLTVLIPKLPQFHGVRLFGINKY</sequence>
<protein>
    <recommendedName>
        <fullName>ORM1-like protein 3</fullName>
    </recommendedName>
</protein>
<comment type="function">
    <text evidence="1">Plays an essential role in the homeostatic regulation of sphingolipid de novo biosynthesis by modulating the activity of the serine palmitoyltransferase (SPT) in response to ceramide levels. When complexed to SPT, the binding of ceramides to its N-terminus stabilizes a conformation that block SPT substrate entry, hence preventing SPT catalytic activity. Through this mechanism, maintains ceramide levels at sufficient concentrations for the production of complex sphingolipids, but which prevents the accumulation of ceramides to levels that trigger apoptosis.</text>
</comment>
<comment type="subunit">
    <text evidence="1">Ceramide-sensitive subunit of the serine palmitoyltransferase (SPT) complex, which is also composed of SPTLC1, SPTLC2/3 and SPTSSA/B.</text>
</comment>
<comment type="subcellular location">
    <subcellularLocation>
        <location evidence="1">Endoplasmic reticulum membrane</location>
        <topology evidence="1">Multi-pass membrane protein</topology>
    </subcellularLocation>
</comment>
<comment type="domain">
    <text evidence="1">Ceramides bind to ORMDL3 N-terminus and stabilize it in a conformation that physically restricts the accessibility of the substrates to their binding sites in the serine palmitoyltransferase (SPT) complex, hence inhibiting SPT catalytic activity. In the absence of ceramides, the N-terminus is flexible and permits substrate binding, thus liberating SPT from inhibition.</text>
</comment>
<comment type="PTM">
    <text evidence="1">When hydroxylated at Pro-137, ubiquitinated via 'Lys-48'-linkage, leading to proteasomal degradation. In endothelial cells, ORMDL3 proteasomal degradation is controlled by the sphingosine 1-phosphate receptor signaling pathway.</text>
</comment>
<comment type="similarity">
    <text evidence="3">Belongs to the ORM family.</text>
</comment>
<evidence type="ECO:0000250" key="1">
    <source>
        <dbReference type="UniProtKB" id="Q8N138"/>
    </source>
</evidence>
<evidence type="ECO:0000255" key="2"/>
<evidence type="ECO:0000305" key="3"/>
<proteinExistence type="evidence at transcript level"/>
<feature type="chain" id="PRO_0000215643" description="ORM1-like protein 3">
    <location>
        <begin position="1"/>
        <end position="153"/>
    </location>
</feature>
<feature type="topological domain" description="Cytoplasmic" evidence="1 2">
    <location>
        <begin position="1"/>
        <end position="21"/>
    </location>
</feature>
<feature type="transmembrane region" description="Helical" evidence="1 2">
    <location>
        <begin position="22"/>
        <end position="42"/>
    </location>
</feature>
<feature type="transmembrane region" description="Helical" evidence="1 2">
    <location>
        <begin position="43"/>
        <end position="63"/>
    </location>
</feature>
<feature type="topological domain" description="Cytoplasmic" evidence="1 2">
    <location>
        <begin position="64"/>
        <end position="94"/>
    </location>
</feature>
<feature type="transmembrane region" description="Helical" evidence="1 2">
    <location>
        <begin position="95"/>
        <end position="117"/>
    </location>
</feature>
<feature type="topological domain" description="Extracellular" evidence="1 2">
    <location>
        <begin position="118"/>
        <end position="121"/>
    </location>
</feature>
<feature type="transmembrane region" description="Helical" evidence="1 2">
    <location>
        <begin position="122"/>
        <end position="142"/>
    </location>
</feature>
<feature type="topological domain" description="Cytoplasmic" evidence="1 2">
    <location>
        <begin position="143"/>
        <end position="153"/>
    </location>
</feature>
<feature type="modified residue" description="Hydroxyproline" evidence="1">
    <location>
        <position position="137"/>
    </location>
</feature>
<accession>Q5XJR6</accession>
<dbReference type="EMBL" id="BC083232">
    <property type="protein sequence ID" value="AAH83232.1"/>
    <property type="molecule type" value="mRNA"/>
</dbReference>
<dbReference type="RefSeq" id="NP_001006087.1">
    <property type="nucleotide sequence ID" value="NM_001006087.1"/>
</dbReference>
<dbReference type="RefSeq" id="XP_068080645.1">
    <property type="nucleotide sequence ID" value="XM_068224544.1"/>
</dbReference>
<dbReference type="SMR" id="Q5XJR6"/>
<dbReference type="FunCoup" id="Q5XJR6">
    <property type="interactions" value="1738"/>
</dbReference>
<dbReference type="STRING" id="7955.ENSDARP00000032009"/>
<dbReference type="PaxDb" id="7955-ENSDARP00000032009"/>
<dbReference type="Ensembl" id="ENSDART00000038310">
    <property type="protein sequence ID" value="ENSDARP00000032009"/>
    <property type="gene ID" value="ENSDARG00000025555"/>
</dbReference>
<dbReference type="Ensembl" id="ENSDART00000184796">
    <property type="protein sequence ID" value="ENSDARP00000145108"/>
    <property type="gene ID" value="ENSDARG00000110450"/>
</dbReference>
<dbReference type="GeneID" id="450067"/>
<dbReference type="KEGG" id="dre:450067"/>
<dbReference type="AGR" id="ZFIN:ZDB-GENE-041010-190"/>
<dbReference type="CTD" id="94103"/>
<dbReference type="ZFIN" id="ZDB-GENE-041010-190">
    <property type="gene designation" value="ormdl3"/>
</dbReference>
<dbReference type="eggNOG" id="KOG3319">
    <property type="taxonomic scope" value="Eukaryota"/>
</dbReference>
<dbReference type="HOGENOM" id="CLU_072117_3_0_1"/>
<dbReference type="InParanoid" id="Q5XJR6"/>
<dbReference type="OMA" id="WTAYILI"/>
<dbReference type="OrthoDB" id="1932233at2759"/>
<dbReference type="PhylomeDB" id="Q5XJR6"/>
<dbReference type="TreeFam" id="TF323369"/>
<dbReference type="Reactome" id="R-DRE-1660661">
    <property type="pathway name" value="Sphingolipid de novo biosynthesis"/>
</dbReference>
<dbReference type="Reactome" id="R-DRE-6798695">
    <property type="pathway name" value="Neutrophil degranulation"/>
</dbReference>
<dbReference type="PRO" id="PR:Q5XJR6"/>
<dbReference type="Proteomes" id="UP000000437">
    <property type="component" value="Alternate scaffold 12"/>
</dbReference>
<dbReference type="Proteomes" id="UP000000437">
    <property type="component" value="Chromosome 12"/>
</dbReference>
<dbReference type="Bgee" id="ENSDARG00000025555">
    <property type="expression patterns" value="Expressed in liver and 21 other cell types or tissues"/>
</dbReference>
<dbReference type="ExpressionAtlas" id="Q5XJR6">
    <property type="expression patterns" value="baseline"/>
</dbReference>
<dbReference type="GO" id="GO:0005783">
    <property type="term" value="C:endoplasmic reticulum"/>
    <property type="evidence" value="ECO:0000250"/>
    <property type="project" value="UniProtKB"/>
</dbReference>
<dbReference type="GO" id="GO:0005789">
    <property type="term" value="C:endoplasmic reticulum membrane"/>
    <property type="evidence" value="ECO:0007669"/>
    <property type="project" value="UniProtKB-SubCell"/>
</dbReference>
<dbReference type="GO" id="GO:0017059">
    <property type="term" value="C:serine palmitoyltransferase complex"/>
    <property type="evidence" value="ECO:0000250"/>
    <property type="project" value="UniProtKB"/>
</dbReference>
<dbReference type="GO" id="GO:0006672">
    <property type="term" value="P:ceramide metabolic process"/>
    <property type="evidence" value="ECO:0000250"/>
    <property type="project" value="UniProtKB"/>
</dbReference>
<dbReference type="GO" id="GO:0090156">
    <property type="term" value="P:intracellular sphingolipid homeostasis"/>
    <property type="evidence" value="ECO:0000318"/>
    <property type="project" value="GO_Central"/>
</dbReference>
<dbReference type="GO" id="GO:2000303">
    <property type="term" value="P:regulation of ceramide biosynthetic process"/>
    <property type="evidence" value="ECO:0007669"/>
    <property type="project" value="UniProtKB-ARBA"/>
</dbReference>
<dbReference type="GO" id="GO:0030148">
    <property type="term" value="P:sphingolipid biosynthetic process"/>
    <property type="evidence" value="ECO:0000318"/>
    <property type="project" value="GO_Central"/>
</dbReference>
<dbReference type="InterPro" id="IPR007203">
    <property type="entry name" value="ORMDL"/>
</dbReference>
<dbReference type="PANTHER" id="PTHR12665">
    <property type="entry name" value="ORMDL PROTEINS"/>
    <property type="match status" value="1"/>
</dbReference>
<dbReference type="Pfam" id="PF04061">
    <property type="entry name" value="ORMDL"/>
    <property type="match status" value="1"/>
</dbReference>
<dbReference type="PIRSF" id="PIRSF018147">
    <property type="entry name" value="ORMDL"/>
    <property type="match status" value="1"/>
</dbReference>
<keyword id="KW-0256">Endoplasmic reticulum</keyword>
<keyword id="KW-0379">Hydroxylation</keyword>
<keyword id="KW-0472">Membrane</keyword>
<keyword id="KW-1185">Reference proteome</keyword>
<keyword id="KW-0812">Transmembrane</keyword>
<keyword id="KW-1133">Transmembrane helix</keyword>
<keyword id="KW-0832">Ubl conjugation</keyword>
<organism>
    <name type="scientific">Danio rerio</name>
    <name type="common">Zebrafish</name>
    <name type="synonym">Brachydanio rerio</name>
    <dbReference type="NCBI Taxonomy" id="7955"/>
    <lineage>
        <taxon>Eukaryota</taxon>
        <taxon>Metazoa</taxon>
        <taxon>Chordata</taxon>
        <taxon>Craniata</taxon>
        <taxon>Vertebrata</taxon>
        <taxon>Euteleostomi</taxon>
        <taxon>Actinopterygii</taxon>
        <taxon>Neopterygii</taxon>
        <taxon>Teleostei</taxon>
        <taxon>Ostariophysi</taxon>
        <taxon>Cypriniformes</taxon>
        <taxon>Danionidae</taxon>
        <taxon>Danioninae</taxon>
        <taxon>Danio</taxon>
    </lineage>
</organism>
<reference key="1">
    <citation type="submission" date="2004-10" db="EMBL/GenBank/DDBJ databases">
        <authorList>
            <consortium name="NIH - Zebrafish Gene Collection (ZGC) project"/>
        </authorList>
    </citation>
    <scope>NUCLEOTIDE SEQUENCE [LARGE SCALE MRNA]</scope>
    <source>
        <tissue>Embryo</tissue>
    </source>
</reference>
<gene>
    <name type="primary">ormdl3</name>
    <name type="ORF">zgc:101654</name>
</gene>
<name>ORML3_DANRE</name>